<comment type="function">
    <text evidence="3">Odorant receptor.</text>
</comment>
<comment type="subcellular location">
    <subcellularLocation>
        <location>Cell membrane</location>
        <topology>Multi-pass membrane protein</topology>
    </subcellularLocation>
</comment>
<comment type="similarity">
    <text evidence="2">Belongs to the G-protein coupled receptor 1 family.</text>
</comment>
<comment type="caution">
    <text evidence="3">It is uncertain whether Met-1 or Met-17 is the initiator.</text>
</comment>
<comment type="sequence caution" evidence="3">
    <conflict type="erroneous initiation">
        <sequence resource="EMBL-CDS" id="BAC05893"/>
    </conflict>
</comment>
<comment type="online information" name="Human Olfactory Receptor Data Exploratorium (HORDE)">
    <link uri="http://genome.weizmann.ac.il/horde/card/index/symbol:OR5H6"/>
</comment>
<gene>
    <name type="primary">OR5H6</name>
</gene>
<protein>
    <recommendedName>
        <fullName>Olfactory receptor 5H6</fullName>
    </recommendedName>
    <alternativeName>
        <fullName>Olfactory receptor OR3-11</fullName>
    </alternativeName>
</protein>
<name>OR5H6_HUMAN</name>
<sequence>MFLYLCFIFQRTCSEEMEEENATLLTEFVLTGFLHQPDCKIPLFLAFLVIYLITIMGNLGLIVLIWKDPHLHIPMYLFLGSLAFVDASLSSTVTPKMLINFLAKSKMISLSECMVQFFSLVTTVTTECFLLATMAYDRYVAICKALLYPVIMTNELCIQLLVLSFIGGLLHALIHEAFSFRLTFCNSNIIQHFYCDIIPLLKISCTDSSINFLMVFIFAGSVQVFTIGTILISYTIILFTILEKKSIKGIRKAVSTCGAHLLSVSLYYGPLTFKYLGSASPQADDQDMMESLFYTVIVPLLNPMIYSLRNKQVIASFTKMFKSNV</sequence>
<proteinExistence type="evidence at transcript level"/>
<evidence type="ECO:0000255" key="1"/>
<evidence type="ECO:0000255" key="2">
    <source>
        <dbReference type="PROSITE-ProRule" id="PRU00521"/>
    </source>
</evidence>
<evidence type="ECO:0000305" key="3"/>
<organism>
    <name type="scientific">Homo sapiens</name>
    <name type="common">Human</name>
    <dbReference type="NCBI Taxonomy" id="9606"/>
    <lineage>
        <taxon>Eukaryota</taxon>
        <taxon>Metazoa</taxon>
        <taxon>Chordata</taxon>
        <taxon>Craniata</taxon>
        <taxon>Vertebrata</taxon>
        <taxon>Euteleostomi</taxon>
        <taxon>Mammalia</taxon>
        <taxon>Eutheria</taxon>
        <taxon>Euarchontoglires</taxon>
        <taxon>Primates</taxon>
        <taxon>Haplorrhini</taxon>
        <taxon>Catarrhini</taxon>
        <taxon>Hominidae</taxon>
        <taxon>Homo</taxon>
    </lineage>
</organism>
<accession>Q8NGV6</accession>
<accession>Q6IF88</accession>
<keyword id="KW-1003">Cell membrane</keyword>
<keyword id="KW-1015">Disulfide bond</keyword>
<keyword id="KW-0297">G-protein coupled receptor</keyword>
<keyword id="KW-0325">Glycoprotein</keyword>
<keyword id="KW-0472">Membrane</keyword>
<keyword id="KW-0552">Olfaction</keyword>
<keyword id="KW-0675">Receptor</keyword>
<keyword id="KW-1185">Reference proteome</keyword>
<keyword id="KW-0716">Sensory transduction</keyword>
<keyword id="KW-0807">Transducer</keyword>
<keyword id="KW-0812">Transmembrane</keyword>
<keyword id="KW-1133">Transmembrane helix</keyword>
<dbReference type="EMBL" id="AB065667">
    <property type="protein sequence ID" value="BAC05893.1"/>
    <property type="status" value="ALT_INIT"/>
    <property type="molecule type" value="Genomic_DNA"/>
</dbReference>
<dbReference type="EMBL" id="BC137523">
    <property type="protein sequence ID" value="AAI37524.1"/>
    <property type="molecule type" value="mRNA"/>
</dbReference>
<dbReference type="EMBL" id="BC137524">
    <property type="protein sequence ID" value="AAI37525.1"/>
    <property type="molecule type" value="mRNA"/>
</dbReference>
<dbReference type="EMBL" id="BK004374">
    <property type="protein sequence ID" value="DAA04772.1"/>
    <property type="molecule type" value="Genomic_DNA"/>
</dbReference>
<dbReference type="RefSeq" id="NP_001005479.1">
    <property type="nucleotide sequence ID" value="NM_001005479.1"/>
</dbReference>
<dbReference type="RefSeq" id="XP_011511420.1">
    <property type="nucleotide sequence ID" value="XM_011513118.2"/>
</dbReference>
<dbReference type="SMR" id="Q8NGV6"/>
<dbReference type="FunCoup" id="Q8NGV6">
    <property type="interactions" value="431"/>
</dbReference>
<dbReference type="IntAct" id="Q8NGV6">
    <property type="interactions" value="1"/>
</dbReference>
<dbReference type="STRING" id="9606.ENSP00000493340"/>
<dbReference type="GlyCosmos" id="Q8NGV6">
    <property type="glycosylation" value="1 site, No reported glycans"/>
</dbReference>
<dbReference type="GlyGen" id="Q8NGV6">
    <property type="glycosylation" value="1 site"/>
</dbReference>
<dbReference type="iPTMnet" id="Q8NGV6"/>
<dbReference type="PhosphoSitePlus" id="Q8NGV6"/>
<dbReference type="BioMuta" id="OR5H6"/>
<dbReference type="DMDM" id="223590117"/>
<dbReference type="PaxDb" id="9606-ENSP00000373196"/>
<dbReference type="Antibodypedia" id="58698">
    <property type="antibodies" value="43 antibodies from 16 providers"/>
</dbReference>
<dbReference type="DNASU" id="79295"/>
<dbReference type="Ensembl" id="ENST00000642105.1">
    <property type="protein sequence ID" value="ENSP00000493340.1"/>
    <property type="gene ID" value="ENSG00000230301.6"/>
</dbReference>
<dbReference type="GeneID" id="79295"/>
<dbReference type="KEGG" id="hsa:79295"/>
<dbReference type="UCSC" id="uc003dsi.1">
    <property type="organism name" value="human"/>
</dbReference>
<dbReference type="AGR" id="HGNC:14767"/>
<dbReference type="CTD" id="79295"/>
<dbReference type="GeneCards" id="OR5H6"/>
<dbReference type="HGNC" id="HGNC:14767">
    <property type="gene designation" value="OR5H6"/>
</dbReference>
<dbReference type="HPA" id="ENSG00000230301">
    <property type="expression patterns" value="Not detected"/>
</dbReference>
<dbReference type="neXtProt" id="NX_Q8NGV6"/>
<dbReference type="PharmGKB" id="PA32537"/>
<dbReference type="VEuPathDB" id="HostDB:ENSG00000230301"/>
<dbReference type="eggNOG" id="ENOG502T9JQ">
    <property type="taxonomic scope" value="Eukaryota"/>
</dbReference>
<dbReference type="GeneTree" id="ENSGT01120000271834"/>
<dbReference type="HOGENOM" id="CLU_012526_5_5_1"/>
<dbReference type="InParanoid" id="Q8NGV6"/>
<dbReference type="OrthoDB" id="9615015at2759"/>
<dbReference type="PAN-GO" id="Q8NGV6">
    <property type="GO annotations" value="2 GO annotations based on evolutionary models"/>
</dbReference>
<dbReference type="PhylomeDB" id="Q8NGV6"/>
<dbReference type="TreeFam" id="TF352737"/>
<dbReference type="PathwayCommons" id="Q8NGV6"/>
<dbReference type="Reactome" id="R-HSA-9752946">
    <property type="pathway name" value="Expression and translocation of olfactory receptors"/>
</dbReference>
<dbReference type="SignaLink" id="Q8NGV6"/>
<dbReference type="BioGRID-ORCS" id="79295">
    <property type="hits" value="8 hits in 639 CRISPR screens"/>
</dbReference>
<dbReference type="GeneWiki" id="OR5H6"/>
<dbReference type="GenomeRNAi" id="79295"/>
<dbReference type="Pharos" id="Q8NGV6">
    <property type="development level" value="Tdark"/>
</dbReference>
<dbReference type="PRO" id="PR:Q8NGV6"/>
<dbReference type="Proteomes" id="UP000005640">
    <property type="component" value="Chromosome 3"/>
</dbReference>
<dbReference type="RNAct" id="Q8NGV6">
    <property type="molecule type" value="protein"/>
</dbReference>
<dbReference type="Bgee" id="ENSG00000230301">
    <property type="expression patterns" value="Expressed in placenta"/>
</dbReference>
<dbReference type="ExpressionAtlas" id="Q8NGV6">
    <property type="expression patterns" value="baseline and differential"/>
</dbReference>
<dbReference type="GO" id="GO:0005886">
    <property type="term" value="C:plasma membrane"/>
    <property type="evidence" value="ECO:0007669"/>
    <property type="project" value="UniProtKB-SubCell"/>
</dbReference>
<dbReference type="GO" id="GO:0004930">
    <property type="term" value="F:G protein-coupled receptor activity"/>
    <property type="evidence" value="ECO:0007669"/>
    <property type="project" value="UniProtKB-KW"/>
</dbReference>
<dbReference type="GO" id="GO:0005549">
    <property type="term" value="F:odorant binding"/>
    <property type="evidence" value="ECO:0000318"/>
    <property type="project" value="GO_Central"/>
</dbReference>
<dbReference type="GO" id="GO:0004984">
    <property type="term" value="F:olfactory receptor activity"/>
    <property type="evidence" value="ECO:0000318"/>
    <property type="project" value="GO_Central"/>
</dbReference>
<dbReference type="FunFam" id="1.20.1070.10:FF:000004">
    <property type="entry name" value="Olfactory receptor"/>
    <property type="match status" value="1"/>
</dbReference>
<dbReference type="Gene3D" id="1.20.1070.10">
    <property type="entry name" value="Rhodopsin 7-helix transmembrane proteins"/>
    <property type="match status" value="1"/>
</dbReference>
<dbReference type="InterPro" id="IPR000276">
    <property type="entry name" value="GPCR_Rhodpsn"/>
</dbReference>
<dbReference type="InterPro" id="IPR017452">
    <property type="entry name" value="GPCR_Rhodpsn_7TM"/>
</dbReference>
<dbReference type="InterPro" id="IPR000725">
    <property type="entry name" value="Olfact_rcpt"/>
</dbReference>
<dbReference type="PANTHER" id="PTHR48018">
    <property type="entry name" value="OLFACTORY RECEPTOR"/>
    <property type="match status" value="1"/>
</dbReference>
<dbReference type="Pfam" id="PF13853">
    <property type="entry name" value="7tm_4"/>
    <property type="match status" value="1"/>
</dbReference>
<dbReference type="PRINTS" id="PR00237">
    <property type="entry name" value="GPCRRHODOPSN"/>
</dbReference>
<dbReference type="PRINTS" id="PR00245">
    <property type="entry name" value="OLFACTORYR"/>
</dbReference>
<dbReference type="SUPFAM" id="SSF81321">
    <property type="entry name" value="Family A G protein-coupled receptor-like"/>
    <property type="match status" value="1"/>
</dbReference>
<dbReference type="PROSITE" id="PS00237">
    <property type="entry name" value="G_PROTEIN_RECEP_F1_1"/>
    <property type="match status" value="1"/>
</dbReference>
<dbReference type="PROSITE" id="PS50262">
    <property type="entry name" value="G_PROTEIN_RECEP_F1_2"/>
    <property type="match status" value="1"/>
</dbReference>
<feature type="chain" id="PRO_0000150597" description="Olfactory receptor 5H6">
    <location>
        <begin position="1"/>
        <end position="325"/>
    </location>
</feature>
<feature type="topological domain" description="Extracellular" evidence="1">
    <location>
        <begin position="1"/>
        <end position="41"/>
    </location>
</feature>
<feature type="transmembrane region" description="Helical; Name=1" evidence="1">
    <location>
        <begin position="42"/>
        <end position="62"/>
    </location>
</feature>
<feature type="topological domain" description="Cytoplasmic" evidence="1">
    <location>
        <begin position="63"/>
        <end position="70"/>
    </location>
</feature>
<feature type="transmembrane region" description="Helical; Name=2" evidence="1">
    <location>
        <begin position="71"/>
        <end position="91"/>
    </location>
</feature>
<feature type="topological domain" description="Extracellular" evidence="1">
    <location>
        <begin position="92"/>
        <end position="115"/>
    </location>
</feature>
<feature type="transmembrane region" description="Helical; Name=3" evidence="1">
    <location>
        <begin position="116"/>
        <end position="136"/>
    </location>
</feature>
<feature type="topological domain" description="Cytoplasmic" evidence="1">
    <location>
        <begin position="137"/>
        <end position="155"/>
    </location>
</feature>
<feature type="transmembrane region" description="Helical; Name=4" evidence="1">
    <location>
        <begin position="156"/>
        <end position="176"/>
    </location>
</feature>
<feature type="topological domain" description="Extracellular" evidence="1">
    <location>
        <begin position="177"/>
        <end position="212"/>
    </location>
</feature>
<feature type="transmembrane region" description="Helical; Name=5" evidence="1">
    <location>
        <begin position="213"/>
        <end position="233"/>
    </location>
</feature>
<feature type="topological domain" description="Cytoplasmic" evidence="1">
    <location>
        <begin position="234"/>
        <end position="253"/>
    </location>
</feature>
<feature type="transmembrane region" description="Helical; Name=6" evidence="1">
    <location>
        <begin position="254"/>
        <end position="274"/>
    </location>
</feature>
<feature type="topological domain" description="Extracellular" evidence="1">
    <location>
        <begin position="275"/>
        <end position="287"/>
    </location>
</feature>
<feature type="transmembrane region" description="Helical; Name=7" evidence="1">
    <location>
        <begin position="288"/>
        <end position="308"/>
    </location>
</feature>
<feature type="topological domain" description="Cytoplasmic" evidence="1">
    <location>
        <begin position="309"/>
        <end position="325"/>
    </location>
</feature>
<feature type="glycosylation site" description="N-linked (GlcNAc...) asparagine" evidence="1">
    <location>
        <position position="21"/>
    </location>
</feature>
<feature type="disulfide bond" evidence="2">
    <location>
        <begin position="113"/>
        <end position="205"/>
    </location>
</feature>
<feature type="sequence variant" id="VAR_054343" description="In dbSNP:rs4241472.">
    <original>A</original>
    <variation>E</variation>
    <location>
        <position position="46"/>
    </location>
</feature>
<feature type="sequence variant" id="VAR_060008" description="In dbSNP:rs2173236.">
    <original>S</original>
    <variation>L</variation>
    <location>
        <position position="88"/>
    </location>
</feature>
<feature type="sequence variant" id="VAR_060009" description="In dbSNP:rs2173236.">
    <original>S</original>
    <variation>W</variation>
    <location>
        <position position="88"/>
    </location>
</feature>
<feature type="sequence variant" id="VAR_054344" description="In dbSNP:rs9289564.">
    <original>A</original>
    <variation>P</variation>
    <location>
        <position position="145"/>
    </location>
</feature>
<feature type="sequence variant" id="VAR_054345" description="In dbSNP:rs16846784.">
    <original>S</original>
    <variation>L</variation>
    <location>
        <position position="179"/>
    </location>
</feature>
<feature type="sequence variant" id="VAR_054346" description="In dbSNP:rs9853887.">
    <original>C</original>
    <variation>R</variation>
    <location>
        <position position="195"/>
    </location>
</feature>
<feature type="sequence variant" id="VAR_054347" description="In dbSNP:rs9853906.">
    <original>T</original>
    <variation>A</variation>
    <location>
        <position position="272"/>
    </location>
</feature>
<feature type="sequence variant" id="VAR_054348" description="In dbSNP:rs9871143.">
    <original>D</original>
    <variation>N</variation>
    <location>
        <position position="285"/>
    </location>
</feature>
<reference key="1">
    <citation type="submission" date="2001-07" db="EMBL/GenBank/DDBJ databases">
        <title>Genome-wide discovery and analysis of human seven transmembrane helix receptor genes.</title>
        <authorList>
            <person name="Suwa M."/>
            <person name="Sato T."/>
            <person name="Okouchi I."/>
            <person name="Arita M."/>
            <person name="Futami K."/>
            <person name="Matsumoto S."/>
            <person name="Tsutsumi S."/>
            <person name="Aburatani H."/>
            <person name="Asai K."/>
            <person name="Akiyama Y."/>
        </authorList>
    </citation>
    <scope>NUCLEOTIDE SEQUENCE [GENOMIC DNA]</scope>
</reference>
<reference key="2">
    <citation type="journal article" date="2004" name="Genome Res.">
        <title>The status, quality, and expansion of the NIH full-length cDNA project: the Mammalian Gene Collection (MGC).</title>
        <authorList>
            <consortium name="The MGC Project Team"/>
        </authorList>
    </citation>
    <scope>NUCLEOTIDE SEQUENCE [LARGE SCALE MRNA]</scope>
</reference>
<reference key="3">
    <citation type="journal article" date="2004" name="Proc. Natl. Acad. Sci. U.S.A.">
        <title>The human olfactory receptor gene family.</title>
        <authorList>
            <person name="Malnic B."/>
            <person name="Godfrey P.A."/>
            <person name="Buck L.B."/>
        </authorList>
    </citation>
    <scope>IDENTIFICATION</scope>
</reference>
<reference key="4">
    <citation type="journal article" date="2004" name="Proc. Natl. Acad. Sci. U.S.A.">
        <authorList>
            <person name="Malnic B."/>
            <person name="Godfrey P.A."/>
            <person name="Buck L.B."/>
        </authorList>
    </citation>
    <scope>ERRATUM OF PUBMED:14983052</scope>
</reference>